<gene>
    <name type="primary">Scrg1</name>
</gene>
<dbReference type="EMBL" id="AJ223206">
    <property type="protein sequence ID" value="CAA11181.1"/>
    <property type="molecule type" value="mRNA"/>
</dbReference>
<dbReference type="EMBL" id="AJ251216">
    <property type="protein sequence ID" value="CAC24847.1"/>
    <property type="molecule type" value="Genomic_DNA"/>
</dbReference>
<dbReference type="EMBL" id="BC058532">
    <property type="status" value="NOT_ANNOTATED_CDS"/>
    <property type="molecule type" value="mRNA"/>
</dbReference>
<dbReference type="CCDS" id="CCDS40342.1"/>
<dbReference type="RefSeq" id="NP_001411804.1">
    <property type="nucleotide sequence ID" value="NM_001424875.1"/>
</dbReference>
<dbReference type="RefSeq" id="NP_033162.1">
    <property type="nucleotide sequence ID" value="NM_009136.4"/>
</dbReference>
<dbReference type="RefSeq" id="XP_017168111.1">
    <property type="nucleotide sequence ID" value="XM_017312622.1"/>
</dbReference>
<dbReference type="BioGRID" id="203111">
    <property type="interactions" value="2"/>
</dbReference>
<dbReference type="FunCoup" id="O88745">
    <property type="interactions" value="55"/>
</dbReference>
<dbReference type="STRING" id="10090.ENSMUSP00000034023"/>
<dbReference type="GlyCosmos" id="O88745">
    <property type="glycosylation" value="1 site, No reported glycans"/>
</dbReference>
<dbReference type="GlyGen" id="O88745">
    <property type="glycosylation" value="1 site"/>
</dbReference>
<dbReference type="PhosphoSitePlus" id="O88745"/>
<dbReference type="SwissPalm" id="O88745"/>
<dbReference type="PaxDb" id="10090-ENSMUSP00000034023"/>
<dbReference type="PeptideAtlas" id="O88745"/>
<dbReference type="ProteomicsDB" id="261136"/>
<dbReference type="Antibodypedia" id="2568">
    <property type="antibodies" value="52 antibodies from 13 providers"/>
</dbReference>
<dbReference type="Ensembl" id="ENSMUST00000034023.4">
    <property type="protein sequence ID" value="ENSMUSP00000034023.4"/>
    <property type="gene ID" value="ENSMUSG00000031610.4"/>
</dbReference>
<dbReference type="GeneID" id="20284"/>
<dbReference type="KEGG" id="mmu:20284"/>
<dbReference type="UCSC" id="uc009lst.1">
    <property type="organism name" value="mouse"/>
</dbReference>
<dbReference type="AGR" id="MGI:1328308"/>
<dbReference type="CTD" id="11341"/>
<dbReference type="MGI" id="MGI:1328308">
    <property type="gene designation" value="Scrg1"/>
</dbReference>
<dbReference type="VEuPathDB" id="HostDB:ENSMUSG00000031610"/>
<dbReference type="eggNOG" id="ENOG502S6ID">
    <property type="taxonomic scope" value="Eukaryota"/>
</dbReference>
<dbReference type="GeneTree" id="ENSGT00390000009191"/>
<dbReference type="HOGENOM" id="CLU_163466_0_0_1"/>
<dbReference type="InParanoid" id="O88745"/>
<dbReference type="OMA" id="NVPDHFW"/>
<dbReference type="OrthoDB" id="8865355at2759"/>
<dbReference type="PhylomeDB" id="O88745"/>
<dbReference type="TreeFam" id="TF335779"/>
<dbReference type="BioGRID-ORCS" id="20284">
    <property type="hits" value="3 hits in 78 CRISPR screens"/>
</dbReference>
<dbReference type="ChiTaRS" id="Scrg1">
    <property type="organism name" value="mouse"/>
</dbReference>
<dbReference type="PRO" id="PR:O88745"/>
<dbReference type="Proteomes" id="UP000000589">
    <property type="component" value="Chromosome 8"/>
</dbReference>
<dbReference type="RNAct" id="O88745">
    <property type="molecule type" value="protein"/>
</dbReference>
<dbReference type="Bgee" id="ENSMUSG00000031610">
    <property type="expression patterns" value="Expressed in granulocyte and 118 other cell types or tissues"/>
</dbReference>
<dbReference type="ExpressionAtlas" id="O88745">
    <property type="expression patterns" value="baseline and differential"/>
</dbReference>
<dbReference type="GO" id="GO:0005737">
    <property type="term" value="C:cytoplasm"/>
    <property type="evidence" value="ECO:0000314"/>
    <property type="project" value="MGI"/>
</dbReference>
<dbReference type="GO" id="GO:0005576">
    <property type="term" value="C:extracellular region"/>
    <property type="evidence" value="ECO:0007669"/>
    <property type="project" value="UniProtKB-SubCell"/>
</dbReference>
<dbReference type="GO" id="GO:0005794">
    <property type="term" value="C:Golgi apparatus"/>
    <property type="evidence" value="ECO:0000314"/>
    <property type="project" value="MGI"/>
</dbReference>
<dbReference type="GO" id="GO:0044306">
    <property type="term" value="C:neuron projection terminus"/>
    <property type="evidence" value="ECO:0000314"/>
    <property type="project" value="MGI"/>
</dbReference>
<dbReference type="GO" id="GO:0097168">
    <property type="term" value="P:mesenchymal stem cell proliferation"/>
    <property type="evidence" value="ECO:0007669"/>
    <property type="project" value="Ensembl"/>
</dbReference>
<dbReference type="InterPro" id="IPR028063">
    <property type="entry name" value="SCRG1"/>
</dbReference>
<dbReference type="PANTHER" id="PTHR17463:SF0">
    <property type="entry name" value="SCRAPIE-RESPONSIVE PROTEIN 1"/>
    <property type="match status" value="1"/>
</dbReference>
<dbReference type="PANTHER" id="PTHR17463">
    <property type="entry name" value="SCRAPIE-RESPONSIVE PROTEIN 1 SCRG1"/>
    <property type="match status" value="1"/>
</dbReference>
<dbReference type="Pfam" id="PF15224">
    <property type="entry name" value="SCRG1"/>
    <property type="match status" value="1"/>
</dbReference>
<evidence type="ECO:0000255" key="1"/>
<evidence type="ECO:0000305" key="2"/>
<comment type="subcellular location">
    <subcellularLocation>
        <location evidence="2">Secreted</location>
    </subcellularLocation>
</comment>
<comment type="developmental stage">
    <text>Expressed at higher levels in the brains of scrapie-infected animals.</text>
</comment>
<comment type="similarity">
    <text evidence="2">Belongs to the SCRG1 family.</text>
</comment>
<protein>
    <recommendedName>
        <fullName>Scrapie-responsive protein 1</fullName>
    </recommendedName>
    <alternativeName>
        <fullName>Scrapie-responsive gene 1 protein</fullName>
        <shortName>ScRG-1</shortName>
    </alternativeName>
</protein>
<name>SCRG1_MOUSE</name>
<organism>
    <name type="scientific">Mus musculus</name>
    <name type="common">Mouse</name>
    <dbReference type="NCBI Taxonomy" id="10090"/>
    <lineage>
        <taxon>Eukaryota</taxon>
        <taxon>Metazoa</taxon>
        <taxon>Chordata</taxon>
        <taxon>Craniata</taxon>
        <taxon>Vertebrata</taxon>
        <taxon>Euteleostomi</taxon>
        <taxon>Mammalia</taxon>
        <taxon>Eutheria</taxon>
        <taxon>Euarchontoglires</taxon>
        <taxon>Glires</taxon>
        <taxon>Rodentia</taxon>
        <taxon>Myomorpha</taxon>
        <taxon>Muroidea</taxon>
        <taxon>Muridae</taxon>
        <taxon>Murinae</taxon>
        <taxon>Mus</taxon>
        <taxon>Mus</taxon>
    </lineage>
</organism>
<reference key="1">
    <citation type="journal article" date="1998" name="J. Biol. Chem.">
        <title>Gene expression in scrapie. Cloning of a new scrapie-responsive gene and the identification of increased levels of seven other mRNA transcripts.</title>
        <authorList>
            <person name="Dandoy-Dron F."/>
            <person name="Guillo F."/>
            <person name="Benboudjema L."/>
            <person name="Deslys J.-P."/>
            <person name="Lasmesas C."/>
            <person name="Dormont D."/>
            <person name="Tovey M.G."/>
            <person name="Dron M."/>
        </authorList>
    </citation>
    <scope>NUCLEOTIDE SEQUENCE [MRNA]</scope>
    <source>
        <strain>C57BL/6J</strain>
        <tissue>Brain</tissue>
    </source>
</reference>
<reference key="2">
    <citation type="journal article" date="1998" name="J. Biol. Chem.">
        <title>Characterization of the human analogue of a scrapie-responsive gene.</title>
        <authorList>
            <person name="Dron M."/>
            <person name="Dandoy-Dron F."/>
            <person name="Guillo F."/>
            <person name="Benboudjema L."/>
            <person name="Hauw J.-J."/>
            <person name="Lebon P."/>
            <person name="Dormont D."/>
            <person name="Tovey M.G."/>
        </authorList>
    </citation>
    <scope>NUCLEOTIDE SEQUENCE [MRNA]</scope>
    <source>
        <strain>C57BL/6N</strain>
        <tissue>Liver</tissue>
    </source>
</reference>
<reference key="3">
    <citation type="journal article" date="2004" name="Genome Res.">
        <title>The status, quality, and expansion of the NIH full-length cDNA project: the Mammalian Gene Collection (MGC).</title>
        <authorList>
            <consortium name="The MGC Project Team"/>
        </authorList>
    </citation>
    <scope>NUCLEOTIDE SEQUENCE [LARGE SCALE MRNA]</scope>
    <source>
        <strain>C57BL/6J</strain>
        <tissue>Brain</tissue>
    </source>
</reference>
<sequence length="98" mass="11173">MMKSVVLVILGLTLLLETQAMPSSRLSCYRKLLKDRNCHNLPEGRADLKLIDANVQHHFWDGKGCEMICYCNFSELLCCPKDVFFGPKISFVIPCNNH</sequence>
<keyword id="KW-0325">Glycoprotein</keyword>
<keyword id="KW-1185">Reference proteome</keyword>
<keyword id="KW-0964">Secreted</keyword>
<keyword id="KW-0732">Signal</keyword>
<feature type="signal peptide" evidence="1">
    <location>
        <begin position="1"/>
        <end position="20"/>
    </location>
</feature>
<feature type="chain" id="PRO_0000022284" description="Scrapie-responsive protein 1">
    <location>
        <begin position="21"/>
        <end position="98"/>
    </location>
</feature>
<feature type="glycosylation site" description="N-linked (GlcNAc...) asparagine" evidence="1">
    <location>
        <position position="72"/>
    </location>
</feature>
<proteinExistence type="evidence at transcript level"/>
<accession>O88745</accession>